<reference key="1">
    <citation type="journal article" date="2006" name="Genetics">
        <title>Widespread adaptive evolution of Drosophila genes with sex-biased expression.</title>
        <authorList>
            <person name="Proeschel M."/>
            <person name="Zhang Z."/>
            <person name="Parsch J."/>
        </authorList>
    </citation>
    <scope>NUCLEOTIDE SEQUENCE [GENOMIC DNA]</scope>
    <source>
        <strain>ZBMEL131</strain>
        <strain>ZBMEL145</strain>
        <strain>ZBMEL157</strain>
        <strain>ZBMEL186</strain>
        <strain>ZBMEL229</strain>
        <strain>ZBMEL377</strain>
        <strain>ZBMEL384</strain>
        <strain>ZBMEL398</strain>
        <strain>ZBMEL82</strain>
        <strain>ZBMEL84</strain>
        <strain>ZBMEL95</strain>
    </source>
</reference>
<reference key="2">
    <citation type="journal article" date="2009" name="Mol. Biol. Evol.">
        <title>The influence of demography and weak selection on the McDonald-Kreitman test: an empirical study in Drosophila.</title>
        <authorList>
            <person name="Parsch J."/>
            <person name="Zhang Z."/>
            <person name="Baines J.F."/>
        </authorList>
    </citation>
    <scope>NUCLEOTIDE SEQUENCE [GENOMIC DNA]</scope>
    <source>
        <strain>MEL01</strain>
        <strain>MEL02</strain>
        <strain>MEL11</strain>
        <strain>MEL12</strain>
        <strain>MEL13</strain>
        <strain>MEL14</strain>
        <strain>MEL15</strain>
        <strain>MEL16</strain>
        <strain>MEL17</strain>
        <strain>MEL18</strain>
        <strain>MEL19</strain>
        <strain>MEL20</strain>
    </source>
</reference>
<reference key="3">
    <citation type="journal article" date="2000" name="Science">
        <title>The genome sequence of Drosophila melanogaster.</title>
        <authorList>
            <person name="Adams M.D."/>
            <person name="Celniker S.E."/>
            <person name="Holt R.A."/>
            <person name="Evans C.A."/>
            <person name="Gocayne J.D."/>
            <person name="Amanatides P.G."/>
            <person name="Scherer S.E."/>
            <person name="Li P.W."/>
            <person name="Hoskins R.A."/>
            <person name="Galle R.F."/>
            <person name="George R.A."/>
            <person name="Lewis S.E."/>
            <person name="Richards S."/>
            <person name="Ashburner M."/>
            <person name="Henderson S.N."/>
            <person name="Sutton G.G."/>
            <person name="Wortman J.R."/>
            <person name="Yandell M.D."/>
            <person name="Zhang Q."/>
            <person name="Chen L.X."/>
            <person name="Brandon R.C."/>
            <person name="Rogers Y.-H.C."/>
            <person name="Blazej R.G."/>
            <person name="Champe M."/>
            <person name="Pfeiffer B.D."/>
            <person name="Wan K.H."/>
            <person name="Doyle C."/>
            <person name="Baxter E.G."/>
            <person name="Helt G."/>
            <person name="Nelson C.R."/>
            <person name="Miklos G.L.G."/>
            <person name="Abril J.F."/>
            <person name="Agbayani A."/>
            <person name="An H.-J."/>
            <person name="Andrews-Pfannkoch C."/>
            <person name="Baldwin D."/>
            <person name="Ballew R.M."/>
            <person name="Basu A."/>
            <person name="Baxendale J."/>
            <person name="Bayraktaroglu L."/>
            <person name="Beasley E.M."/>
            <person name="Beeson K.Y."/>
            <person name="Benos P.V."/>
            <person name="Berman B.P."/>
            <person name="Bhandari D."/>
            <person name="Bolshakov S."/>
            <person name="Borkova D."/>
            <person name="Botchan M.R."/>
            <person name="Bouck J."/>
            <person name="Brokstein P."/>
            <person name="Brottier P."/>
            <person name="Burtis K.C."/>
            <person name="Busam D.A."/>
            <person name="Butler H."/>
            <person name="Cadieu E."/>
            <person name="Center A."/>
            <person name="Chandra I."/>
            <person name="Cherry J.M."/>
            <person name="Cawley S."/>
            <person name="Dahlke C."/>
            <person name="Davenport L.B."/>
            <person name="Davies P."/>
            <person name="de Pablos B."/>
            <person name="Delcher A."/>
            <person name="Deng Z."/>
            <person name="Mays A.D."/>
            <person name="Dew I."/>
            <person name="Dietz S.M."/>
            <person name="Dodson K."/>
            <person name="Doup L.E."/>
            <person name="Downes M."/>
            <person name="Dugan-Rocha S."/>
            <person name="Dunkov B.C."/>
            <person name="Dunn P."/>
            <person name="Durbin K.J."/>
            <person name="Evangelista C.C."/>
            <person name="Ferraz C."/>
            <person name="Ferriera S."/>
            <person name="Fleischmann W."/>
            <person name="Fosler C."/>
            <person name="Gabrielian A.E."/>
            <person name="Garg N.S."/>
            <person name="Gelbart W.M."/>
            <person name="Glasser K."/>
            <person name="Glodek A."/>
            <person name="Gong F."/>
            <person name="Gorrell J.H."/>
            <person name="Gu Z."/>
            <person name="Guan P."/>
            <person name="Harris M."/>
            <person name="Harris N.L."/>
            <person name="Harvey D.A."/>
            <person name="Heiman T.J."/>
            <person name="Hernandez J.R."/>
            <person name="Houck J."/>
            <person name="Hostin D."/>
            <person name="Houston K.A."/>
            <person name="Howland T.J."/>
            <person name="Wei M.-H."/>
            <person name="Ibegwam C."/>
            <person name="Jalali M."/>
            <person name="Kalush F."/>
            <person name="Karpen G.H."/>
            <person name="Ke Z."/>
            <person name="Kennison J.A."/>
            <person name="Ketchum K.A."/>
            <person name="Kimmel B.E."/>
            <person name="Kodira C.D."/>
            <person name="Kraft C.L."/>
            <person name="Kravitz S."/>
            <person name="Kulp D."/>
            <person name="Lai Z."/>
            <person name="Lasko P."/>
            <person name="Lei Y."/>
            <person name="Levitsky A.A."/>
            <person name="Li J.H."/>
            <person name="Li Z."/>
            <person name="Liang Y."/>
            <person name="Lin X."/>
            <person name="Liu X."/>
            <person name="Mattei B."/>
            <person name="McIntosh T.C."/>
            <person name="McLeod M.P."/>
            <person name="McPherson D."/>
            <person name="Merkulov G."/>
            <person name="Milshina N.V."/>
            <person name="Mobarry C."/>
            <person name="Morris J."/>
            <person name="Moshrefi A."/>
            <person name="Mount S.M."/>
            <person name="Moy M."/>
            <person name="Murphy B."/>
            <person name="Murphy L."/>
            <person name="Muzny D.M."/>
            <person name="Nelson D.L."/>
            <person name="Nelson D.R."/>
            <person name="Nelson K.A."/>
            <person name="Nixon K."/>
            <person name="Nusskern D.R."/>
            <person name="Pacleb J.M."/>
            <person name="Palazzolo M."/>
            <person name="Pittman G.S."/>
            <person name="Pan S."/>
            <person name="Pollard J."/>
            <person name="Puri V."/>
            <person name="Reese M.G."/>
            <person name="Reinert K."/>
            <person name="Remington K."/>
            <person name="Saunders R.D.C."/>
            <person name="Scheeler F."/>
            <person name="Shen H."/>
            <person name="Shue B.C."/>
            <person name="Siden-Kiamos I."/>
            <person name="Simpson M."/>
            <person name="Skupski M.P."/>
            <person name="Smith T.J."/>
            <person name="Spier E."/>
            <person name="Spradling A.C."/>
            <person name="Stapleton M."/>
            <person name="Strong R."/>
            <person name="Sun E."/>
            <person name="Svirskas R."/>
            <person name="Tector C."/>
            <person name="Turner R."/>
            <person name="Venter E."/>
            <person name="Wang A.H."/>
            <person name="Wang X."/>
            <person name="Wang Z.-Y."/>
            <person name="Wassarman D.A."/>
            <person name="Weinstock G.M."/>
            <person name="Weissenbach J."/>
            <person name="Williams S.M."/>
            <person name="Woodage T."/>
            <person name="Worley K.C."/>
            <person name="Wu D."/>
            <person name="Yang S."/>
            <person name="Yao Q.A."/>
            <person name="Ye J."/>
            <person name="Yeh R.-F."/>
            <person name="Zaveri J.S."/>
            <person name="Zhan M."/>
            <person name="Zhang G."/>
            <person name="Zhao Q."/>
            <person name="Zheng L."/>
            <person name="Zheng X.H."/>
            <person name="Zhong F.N."/>
            <person name="Zhong W."/>
            <person name="Zhou X."/>
            <person name="Zhu S.C."/>
            <person name="Zhu X."/>
            <person name="Smith H.O."/>
            <person name="Gibbs R.A."/>
            <person name="Myers E.W."/>
            <person name="Rubin G.M."/>
            <person name="Venter J.C."/>
        </authorList>
    </citation>
    <scope>NUCLEOTIDE SEQUENCE [LARGE SCALE GENOMIC DNA]</scope>
    <source>
        <strain>Berkeley</strain>
    </source>
</reference>
<reference key="4">
    <citation type="journal article" date="2002" name="Genome Biol.">
        <title>Annotation of the Drosophila melanogaster euchromatic genome: a systematic review.</title>
        <authorList>
            <person name="Misra S."/>
            <person name="Crosby M.A."/>
            <person name="Mungall C.J."/>
            <person name="Matthews B.B."/>
            <person name="Campbell K.S."/>
            <person name="Hradecky P."/>
            <person name="Huang Y."/>
            <person name="Kaminker J.S."/>
            <person name="Millburn G.H."/>
            <person name="Prochnik S.E."/>
            <person name="Smith C.D."/>
            <person name="Tupy J.L."/>
            <person name="Whitfield E.J."/>
            <person name="Bayraktaroglu L."/>
            <person name="Berman B.P."/>
            <person name="Bettencourt B.R."/>
            <person name="Celniker S.E."/>
            <person name="de Grey A.D.N.J."/>
            <person name="Drysdale R.A."/>
            <person name="Harris N.L."/>
            <person name="Richter J."/>
            <person name="Russo S."/>
            <person name="Schroeder A.J."/>
            <person name="Shu S.Q."/>
            <person name="Stapleton M."/>
            <person name="Yamada C."/>
            <person name="Ashburner M."/>
            <person name="Gelbart W.M."/>
            <person name="Rubin G.M."/>
            <person name="Lewis S.E."/>
        </authorList>
    </citation>
    <scope>GENOME REANNOTATION</scope>
    <source>
        <strain>Berkeley</strain>
    </source>
</reference>
<reference key="5">
    <citation type="journal article" date="2002" name="Genome Biol.">
        <title>A Drosophila full-length cDNA resource.</title>
        <authorList>
            <person name="Stapleton M."/>
            <person name="Carlson J.W."/>
            <person name="Brokstein P."/>
            <person name="Yu C."/>
            <person name="Champe M."/>
            <person name="George R.A."/>
            <person name="Guarin H."/>
            <person name="Kronmiller B."/>
            <person name="Pacleb J.M."/>
            <person name="Park S."/>
            <person name="Wan K.H."/>
            <person name="Rubin G.M."/>
            <person name="Celniker S.E."/>
        </authorList>
    </citation>
    <scope>NUCLEOTIDE SEQUENCE [LARGE SCALE MRNA]</scope>
    <source>
        <strain>Berkeley</strain>
        <tissue>Embryo</tissue>
    </source>
</reference>
<reference key="6">
    <citation type="journal article" date="2007" name="Dev. Cell">
        <title>zucchini and squash encode two putative nucleases required for rasiRNA production in the Drosophila germline.</title>
        <authorList>
            <person name="Pane A."/>
            <person name="Wehr K."/>
            <person name="Schupbach T."/>
        </authorList>
    </citation>
    <scope>FUNCTION</scope>
    <scope>MUTAGENESIS OF ALA-47 AND HIS-169</scope>
    <scope>DISRUPTION PHENOTYPE</scope>
</reference>
<reference key="7">
    <citation type="journal article" date="2009" name="Nature">
        <title>A regulatory circuit for piwi by the large Maf gene traffic jam in Drosophila.</title>
        <authorList>
            <person name="Saito K."/>
            <person name="Inagaki S."/>
            <person name="Mituyama T."/>
            <person name="Kawamura Y."/>
            <person name="Ono Y."/>
            <person name="Sakota E."/>
            <person name="Kotani H."/>
            <person name="Asai K."/>
            <person name="Siomi H."/>
            <person name="Siomi M.C."/>
        </authorList>
    </citation>
    <scope>FUNCTION</scope>
</reference>
<reference key="8">
    <citation type="journal article" date="2010" name="EMBO J.">
        <title>An in vivo RNAi assay identifies major genetic and cellular requirements for primary piRNA biogenesis in Drosophila.</title>
        <authorList>
            <person name="Olivieri D."/>
            <person name="Sykora M.M."/>
            <person name="Sachidanandam R."/>
            <person name="Mechtler K."/>
            <person name="Brennecke J."/>
        </authorList>
    </citation>
    <scope>FUNCTION</scope>
</reference>
<reference key="9">
    <citation type="journal article" date="2010" name="Genes Dev.">
        <title>Roles for the Yb body components Armitage and Yb in primary piRNA biogenesis in Drosophila.</title>
        <authorList>
            <person name="Saito K."/>
            <person name="Ishizu H."/>
            <person name="Komai M."/>
            <person name="Kotani H."/>
            <person name="Kawamura Y."/>
            <person name="Nishida K.M."/>
            <person name="Siomi H."/>
            <person name="Siomi M.C."/>
        </authorList>
    </citation>
    <scope>FUNCTION</scope>
    <scope>SUBCELLULAR LOCATION</scope>
</reference>
<reference key="10">
    <citation type="journal article" date="2010" name="Genes Dev.">
        <title>Probing the initiation and effector phases of the somatic piRNA pathway in Drosophila.</title>
        <authorList>
            <person name="Haase A.D."/>
            <person name="Fenoglio S."/>
            <person name="Muerdter F."/>
            <person name="Guzzardo P.M."/>
            <person name="Czech B."/>
            <person name="Pappin D.J."/>
            <person name="Chen C."/>
            <person name="Gordon A."/>
            <person name="Hannon G.J."/>
        </authorList>
    </citation>
    <scope>FUNCTION</scope>
</reference>
<reference key="11">
    <citation type="journal article" date="2010" name="PLoS ONE">
        <title>The epigenetic trans-silencing effect in Drosophila involves maternally-transmitted small RNAs whose production depends on the piRNA pathway and HP1.</title>
        <authorList>
            <person name="Todeschini A.L."/>
            <person name="Teysset L."/>
            <person name="Delmarre V."/>
            <person name="Ronsseray S."/>
        </authorList>
    </citation>
    <scope>FUNCTION</scope>
</reference>
<reference key="12">
    <citation type="journal article" date="2011" name="Dev. Cell">
        <title>piRNA-associated germline nuage formation and spermatogenesis require MitoPLD profusogenic mitochondrial-surface lipid signaling.</title>
        <authorList>
            <person name="Huang H."/>
            <person name="Gao Q."/>
            <person name="Peng X."/>
            <person name="Choi S.Y."/>
            <person name="Sarma K."/>
            <person name="Ren H."/>
            <person name="Morris A.J."/>
            <person name="Frohman M.A."/>
        </authorList>
    </citation>
    <scope>FUNCTION</scope>
    <scope>SUBCELLULAR LOCATION</scope>
    <scope>MUTAGENESIS OF HIS-169</scope>
</reference>
<reference key="13">
    <citation type="journal article" date="2015" name="Mol. Cell">
        <title>Aub and Ago3 Are Recruited to Nuage through Two Mechanisms to Form a Ping-Pong Complex Assembled by Krimper.</title>
        <authorList>
            <person name="Webster A."/>
            <person name="Li S."/>
            <person name="Hur J.K."/>
            <person name="Wachsmuth M."/>
            <person name="Bois J.S."/>
            <person name="Perkins E.M."/>
            <person name="Patel D.J."/>
            <person name="Aravin A.A."/>
        </authorList>
    </citation>
    <scope>SUBCELLULAR LOCATION</scope>
</reference>
<reference key="14">
    <citation type="journal article" date="2016" name="Mol. Cell">
        <title>Mitoguardin regulates mitochondrial fusion through MitoPLD and is required for neuronal homeostasis.</title>
        <authorList>
            <person name="Zhang Y."/>
            <person name="Liu X."/>
            <person name="Bai J."/>
            <person name="Tian X."/>
            <person name="Zhao X."/>
            <person name="Liu W."/>
            <person name="Duan X."/>
            <person name="Shang W."/>
            <person name="Fan H.Y."/>
            <person name="Tong C."/>
        </authorList>
    </citation>
    <scope>INTERACTION WITH MIGA</scope>
</reference>
<evidence type="ECO:0000250" key="1">
    <source>
        <dbReference type="UniProtKB" id="Q5SWZ9"/>
    </source>
</evidence>
<evidence type="ECO:0000250" key="2">
    <source>
        <dbReference type="UniProtKB" id="Q8N2A8"/>
    </source>
</evidence>
<evidence type="ECO:0000255" key="3"/>
<evidence type="ECO:0000269" key="4">
    <source>
    </source>
</evidence>
<evidence type="ECO:0000269" key="5">
    <source>
    </source>
</evidence>
<evidence type="ECO:0000269" key="6">
    <source>
    </source>
</evidence>
<evidence type="ECO:0000269" key="7">
    <source>
    </source>
</evidence>
<evidence type="ECO:0000269" key="8">
    <source>
    </source>
</evidence>
<evidence type="ECO:0000269" key="9">
    <source>
    </source>
</evidence>
<evidence type="ECO:0000269" key="10">
    <source>
    </source>
</evidence>
<evidence type="ECO:0000269" key="11">
    <source>
    </source>
</evidence>
<evidence type="ECO:0000269" key="12">
    <source>
    </source>
</evidence>
<evidence type="ECO:0000303" key="13">
    <source>
    </source>
</evidence>
<evidence type="ECO:0000305" key="14"/>
<evidence type="ECO:0000312" key="15">
    <source>
        <dbReference type="FlyBase" id="FBgn0261266"/>
    </source>
</evidence>
<evidence type="ECO:0007829" key="16">
    <source>
        <dbReference type="PDB" id="4GEL"/>
    </source>
</evidence>
<accession>Q9VKD7</accession>
<accession>A0AP42</accession>
<accession>A0AP43</accession>
<accession>A0AP44</accession>
<accession>A0AP47</accession>
<accession>A0AP48</accession>
<accession>A0AP51</accession>
<gene>
    <name evidence="13 15" type="primary">zuc</name>
    <name evidence="15" type="ORF">CG12314</name>
</gene>
<comment type="function">
    <text evidence="4 5 6 7 8 9 10">Cardiolipin hydrolase present at the mitochondrial outer membrane required for piRNA metabolic process. Acts by catalyzing the hydrolysis of cardiolipin (diphosphatidylglycerol) to form phosphatidate (phosphatidic acid or PA) at the mitochondrial outer membrane surface, promoting the piRNA metabolic process. Plays a key role in primary biogenesis of piRNAs and is required during oogenesis to repress transposable elements and prevent their mobilization. piRNAs mediate the repression of transposable elements during meiosis by forming complexes composed of piRNAs and Piwi proteins and govern the methylation and subsequent repression of transposons. Involved in trans-silencing effect (TSE), a homology-dependent repression mechanism by which a P-transgene inserted in subtelomeric heterochromatin via its role in piRNA biogenesis.</text>
</comment>
<comment type="subunit">
    <text evidence="1 12">Homodimer (By similarity). Interacts with miga/CG12125 (PubMed:26711011).</text>
</comment>
<comment type="interaction">
    <interactant intactId="EBI-9943000">
        <id>Q9VKD7</id>
    </interactant>
    <interactant intactId="EBI-184365">
        <id>Q9W3F7</id>
        <label>Miga</label>
    </interactant>
    <organismsDiffer>false</organismsDiffer>
    <experiments>2</experiments>
</comment>
<comment type="interaction">
    <interactant intactId="EBI-9943000">
        <id>Q9VKD7</id>
    </interactant>
    <interactant intactId="EBI-9943000">
        <id>Q9VKD7</id>
        <label>zuc</label>
    </interactant>
    <organismsDiffer>false</organismsDiffer>
    <experiments>3</experiments>
</comment>
<comment type="subcellular location">
    <subcellularLocation>
        <location evidence="8 10">Mitochondrion outer membrane</location>
        <topology evidence="8 10">Single-pass membrane protein</topology>
    </subcellularLocation>
    <text evidence="11">as initially reported to localize to the perinuclear meiotic nuage (also known as germline granule or P granule), a germline-specific membraneless ribonucleoprotein biocondensate involved in post-transcriptional regulation of transposons and mRNAs (PubMed:17543859). However, it was later shown that the EGFP tag at N-terminus used in initial experiments interfered with mitochondrial localization and caused it to form perinuclear aggregates (PubMed:20966047, PubMed:21397848). These aggregates do not colocalize with components of the perinuclear nuage (PubMed:26295961).</text>
</comment>
<comment type="domain">
    <text evidence="2">In contrast to other members of the phospholipase D family, contains only one PLD phosphodiesterase domain, suggesting that it has a single half-catalytic and requires homodimerization to form a complete active site.</text>
</comment>
<comment type="disruption phenotype">
    <text evidence="4">Defects in mid oogenesis. Females are viable but produce eggs with a range of dorso-ventral patterning defects. Flies lay few eggs, all of which are completely ventralized and often collapsed. Effects are due to defects in piRNA biogenesis and derepression of retrotransposons. Defects are not only present in germ cells but also in somatic cells of the ovary.</text>
</comment>
<comment type="similarity">
    <text evidence="14">Belongs to the phospholipase D family. MitoPLD/Zucchini subfamily.</text>
</comment>
<dbReference type="EC" id="3.1.4.-"/>
<dbReference type="EMBL" id="AM294430">
    <property type="protein sequence ID" value="CAL26369.1"/>
    <property type="molecule type" value="Genomic_DNA"/>
</dbReference>
<dbReference type="EMBL" id="AM294431">
    <property type="protein sequence ID" value="CAL26370.1"/>
    <property type="molecule type" value="Genomic_DNA"/>
</dbReference>
<dbReference type="EMBL" id="AM294432">
    <property type="protein sequence ID" value="CAL26371.1"/>
    <property type="molecule type" value="Genomic_DNA"/>
</dbReference>
<dbReference type="EMBL" id="AM294433">
    <property type="protein sequence ID" value="CAL26372.1"/>
    <property type="molecule type" value="Genomic_DNA"/>
</dbReference>
<dbReference type="EMBL" id="AM294434">
    <property type="protein sequence ID" value="CAL26373.1"/>
    <property type="molecule type" value="Genomic_DNA"/>
</dbReference>
<dbReference type="EMBL" id="AM294435">
    <property type="protein sequence ID" value="CAL26374.1"/>
    <property type="molecule type" value="Genomic_DNA"/>
</dbReference>
<dbReference type="EMBL" id="AM294436">
    <property type="protein sequence ID" value="CAL26375.1"/>
    <property type="molecule type" value="Genomic_DNA"/>
</dbReference>
<dbReference type="EMBL" id="AM294437">
    <property type="protein sequence ID" value="CAL26377.1"/>
    <property type="molecule type" value="Genomic_DNA"/>
</dbReference>
<dbReference type="EMBL" id="AM294438">
    <property type="protein sequence ID" value="CAL26381.1"/>
    <property type="molecule type" value="Genomic_DNA"/>
</dbReference>
<dbReference type="EMBL" id="AM294439">
    <property type="protein sequence ID" value="CAL26382.1"/>
    <property type="molecule type" value="Genomic_DNA"/>
</dbReference>
<dbReference type="EMBL" id="AM294440">
    <property type="protein sequence ID" value="CAL26383.1"/>
    <property type="molecule type" value="Genomic_DNA"/>
</dbReference>
<dbReference type="EMBL" id="FM245502">
    <property type="protein sequence ID" value="CAR93428.1"/>
    <property type="molecule type" value="Genomic_DNA"/>
</dbReference>
<dbReference type="EMBL" id="FM245503">
    <property type="protein sequence ID" value="CAR93429.1"/>
    <property type="molecule type" value="Genomic_DNA"/>
</dbReference>
<dbReference type="EMBL" id="FM245504">
    <property type="protein sequence ID" value="CAR93430.1"/>
    <property type="molecule type" value="Genomic_DNA"/>
</dbReference>
<dbReference type="EMBL" id="FM245505">
    <property type="protein sequence ID" value="CAR93431.1"/>
    <property type="molecule type" value="Genomic_DNA"/>
</dbReference>
<dbReference type="EMBL" id="FM245506">
    <property type="protein sequence ID" value="CAR93432.1"/>
    <property type="molecule type" value="Genomic_DNA"/>
</dbReference>
<dbReference type="EMBL" id="FM245507">
    <property type="protein sequence ID" value="CAR93433.1"/>
    <property type="molecule type" value="Genomic_DNA"/>
</dbReference>
<dbReference type="EMBL" id="FM245508">
    <property type="protein sequence ID" value="CAR93434.1"/>
    <property type="molecule type" value="Genomic_DNA"/>
</dbReference>
<dbReference type="EMBL" id="FM245509">
    <property type="protein sequence ID" value="CAR93435.1"/>
    <property type="molecule type" value="Genomic_DNA"/>
</dbReference>
<dbReference type="EMBL" id="FM245510">
    <property type="protein sequence ID" value="CAR93436.1"/>
    <property type="molecule type" value="Genomic_DNA"/>
</dbReference>
<dbReference type="EMBL" id="FM245511">
    <property type="protein sequence ID" value="CAR93437.1"/>
    <property type="molecule type" value="Genomic_DNA"/>
</dbReference>
<dbReference type="EMBL" id="FM245512">
    <property type="protein sequence ID" value="CAR93438.1"/>
    <property type="molecule type" value="Genomic_DNA"/>
</dbReference>
<dbReference type="EMBL" id="FM245513">
    <property type="protein sequence ID" value="CAR93439.1"/>
    <property type="molecule type" value="Genomic_DNA"/>
</dbReference>
<dbReference type="EMBL" id="AE014134">
    <property type="protein sequence ID" value="AAF53139.1"/>
    <property type="molecule type" value="Genomic_DNA"/>
</dbReference>
<dbReference type="EMBL" id="AY118493">
    <property type="protein sequence ID" value="AAM49862.1"/>
    <property type="molecule type" value="mRNA"/>
</dbReference>
<dbReference type="RefSeq" id="NP_609530.1">
    <property type="nucleotide sequence ID" value="NM_135686.3"/>
</dbReference>
<dbReference type="PDB" id="4GEL">
    <property type="method" value="X-ray"/>
    <property type="resolution" value="1.76 A"/>
    <property type="chains" value="A/B=41-253"/>
</dbReference>
<dbReference type="PDB" id="4GEM">
    <property type="method" value="X-ray"/>
    <property type="resolution" value="2.21 A"/>
    <property type="chains" value="A/B=41-253"/>
</dbReference>
<dbReference type="PDB" id="4GEN">
    <property type="method" value="X-ray"/>
    <property type="resolution" value="2.20 A"/>
    <property type="chains" value="A=89-250"/>
</dbReference>
<dbReference type="PDB" id="4H4A">
    <property type="method" value="X-ray"/>
    <property type="resolution" value="2.20 A"/>
    <property type="chains" value="A=89-253"/>
</dbReference>
<dbReference type="PDBsum" id="4GEL"/>
<dbReference type="PDBsum" id="4GEM"/>
<dbReference type="PDBsum" id="4GEN"/>
<dbReference type="PDBsum" id="4H4A"/>
<dbReference type="SMR" id="Q9VKD7"/>
<dbReference type="BioGRID" id="60662">
    <property type="interactions" value="358"/>
</dbReference>
<dbReference type="DIP" id="DIP-59983N"/>
<dbReference type="FunCoup" id="Q9VKD7">
    <property type="interactions" value="136"/>
</dbReference>
<dbReference type="IntAct" id="Q9VKD7">
    <property type="interactions" value="2"/>
</dbReference>
<dbReference type="STRING" id="7227.FBpp0079900"/>
<dbReference type="PaxDb" id="7227-FBpp0079900"/>
<dbReference type="DNASU" id="34609"/>
<dbReference type="EnsemblMetazoa" id="FBtr0080316">
    <property type="protein sequence ID" value="FBpp0079900"/>
    <property type="gene ID" value="FBgn0261266"/>
</dbReference>
<dbReference type="GeneID" id="34609"/>
<dbReference type="KEGG" id="dme:Dmel_CG12314"/>
<dbReference type="UCSC" id="CG12314-RA">
    <property type="organism name" value="d. melanogaster"/>
</dbReference>
<dbReference type="AGR" id="FB:FBgn0261266"/>
<dbReference type="CTD" id="34609"/>
<dbReference type="FlyBase" id="FBgn0261266">
    <property type="gene designation" value="zuc"/>
</dbReference>
<dbReference type="VEuPathDB" id="VectorBase:FBgn0261266"/>
<dbReference type="eggNOG" id="ENOG502RXG9">
    <property type="taxonomic scope" value="Eukaryota"/>
</dbReference>
<dbReference type="GeneTree" id="ENSGT00390000004368"/>
<dbReference type="HOGENOM" id="CLU_080814_0_1_1"/>
<dbReference type="InParanoid" id="Q9VKD7"/>
<dbReference type="OMA" id="IDIAIYT"/>
<dbReference type="OrthoDB" id="5205528at2759"/>
<dbReference type="PhylomeDB" id="Q9VKD7"/>
<dbReference type="Reactome" id="R-DME-1483166">
    <property type="pathway name" value="Synthesis of PA"/>
</dbReference>
<dbReference type="BioGRID-ORCS" id="34609">
    <property type="hits" value="0 hits in 1 CRISPR screen"/>
</dbReference>
<dbReference type="EvolutionaryTrace" id="Q9VKD7"/>
<dbReference type="GenomeRNAi" id="34609"/>
<dbReference type="PRO" id="PR:Q9VKD7"/>
<dbReference type="Proteomes" id="UP000000803">
    <property type="component" value="Chromosome 2L"/>
</dbReference>
<dbReference type="Bgee" id="FBgn0261266">
    <property type="expression patterns" value="Expressed in spermatogonium in testis and 22 other cell types or tissues"/>
</dbReference>
<dbReference type="ExpressionAtlas" id="Q9VKD7">
    <property type="expression patterns" value="baseline and differential"/>
</dbReference>
<dbReference type="GO" id="GO:0032473">
    <property type="term" value="C:cytoplasmic side of mitochondrial outer membrane"/>
    <property type="evidence" value="ECO:0000314"/>
    <property type="project" value="FlyBase"/>
</dbReference>
<dbReference type="GO" id="GO:0005739">
    <property type="term" value="C:mitochondrion"/>
    <property type="evidence" value="ECO:0000314"/>
    <property type="project" value="UniProtKB"/>
</dbReference>
<dbReference type="GO" id="GO:0043186">
    <property type="term" value="C:P granule"/>
    <property type="evidence" value="ECO:0000314"/>
    <property type="project" value="FlyBase"/>
</dbReference>
<dbReference type="GO" id="GO:0035755">
    <property type="term" value="F:cardiolipin hydrolase activity"/>
    <property type="evidence" value="ECO:0000314"/>
    <property type="project" value="UniProtKB"/>
</dbReference>
<dbReference type="GO" id="GO:0042802">
    <property type="term" value="F:identical protein binding"/>
    <property type="evidence" value="ECO:0000353"/>
    <property type="project" value="IntAct"/>
</dbReference>
<dbReference type="GO" id="GO:0016891">
    <property type="term" value="F:RNA endonuclease activity, producing 5'-phosphomonoesters"/>
    <property type="evidence" value="ECO:0000314"/>
    <property type="project" value="FlyBase"/>
</dbReference>
<dbReference type="GO" id="GO:0046843">
    <property type="term" value="P:dorsal appendage formation"/>
    <property type="evidence" value="ECO:0007001"/>
    <property type="project" value="FlyBase"/>
</dbReference>
<dbReference type="GO" id="GO:0016042">
    <property type="term" value="P:lipid catabolic process"/>
    <property type="evidence" value="ECO:0007669"/>
    <property type="project" value="UniProtKB-KW"/>
</dbReference>
<dbReference type="GO" id="GO:0030717">
    <property type="term" value="P:oocyte karyosome formation"/>
    <property type="evidence" value="ECO:0000315"/>
    <property type="project" value="FlyBase"/>
</dbReference>
<dbReference type="GO" id="GO:0048477">
    <property type="term" value="P:oogenesis"/>
    <property type="evidence" value="ECO:0007001"/>
    <property type="project" value="FlyBase"/>
</dbReference>
<dbReference type="GO" id="GO:0034587">
    <property type="term" value="P:piRNA processing"/>
    <property type="evidence" value="ECO:0000315"/>
    <property type="project" value="UniProtKB"/>
</dbReference>
<dbReference type="GO" id="GO:0140990">
    <property type="term" value="P:primary piRNA processing"/>
    <property type="evidence" value="ECO:0000315"/>
    <property type="project" value="FlyBase"/>
</dbReference>
<dbReference type="GO" id="GO:0031047">
    <property type="term" value="P:regulatory ncRNA-mediated gene silencing"/>
    <property type="evidence" value="ECO:0000315"/>
    <property type="project" value="FlyBase"/>
</dbReference>
<dbReference type="Gene3D" id="3.30.870.10">
    <property type="entry name" value="Endonuclease Chain A"/>
    <property type="match status" value="1"/>
</dbReference>
<dbReference type="InterPro" id="IPR025202">
    <property type="entry name" value="PLD-like_dom"/>
</dbReference>
<dbReference type="InterPro" id="IPR051406">
    <property type="entry name" value="PLD_domain"/>
</dbReference>
<dbReference type="PANTHER" id="PTHR43856">
    <property type="entry name" value="CARDIOLIPIN HYDROLASE"/>
    <property type="match status" value="1"/>
</dbReference>
<dbReference type="PANTHER" id="PTHR43856:SF1">
    <property type="entry name" value="MITOCHONDRIAL CARDIOLIPIN HYDROLASE"/>
    <property type="match status" value="1"/>
</dbReference>
<dbReference type="Pfam" id="PF13091">
    <property type="entry name" value="PLDc_2"/>
    <property type="match status" value="1"/>
</dbReference>
<dbReference type="SUPFAM" id="SSF56024">
    <property type="entry name" value="Phospholipase D/nuclease"/>
    <property type="match status" value="1"/>
</dbReference>
<sequence length="253" mass="28520">MLITQIIMKQIRDYPIVSTISIAVSTVLASEVIWKLVQCSRSKREKASRVHEVIIFNELGEICAAVHMRNSSMGSQKPQVSPCCNTHCSLRNVAKIVEQIDRAVYSIDLAIYTFTSLFLADSIKRALQRGVIIRIISDGEMVYSKGSQISMLAQLGVPVRVPITTNLMHNKFCIIDGFERVEEIRLLRKLKFMRPCYSIVISGSVNWTALGLGGNWENCIITADDKLTATFQAEFQRMWRAFAKTEGSQIQLK</sequence>
<name>ZUC_DROME</name>
<organism>
    <name type="scientific">Drosophila melanogaster</name>
    <name type="common">Fruit fly</name>
    <dbReference type="NCBI Taxonomy" id="7227"/>
    <lineage>
        <taxon>Eukaryota</taxon>
        <taxon>Metazoa</taxon>
        <taxon>Ecdysozoa</taxon>
        <taxon>Arthropoda</taxon>
        <taxon>Hexapoda</taxon>
        <taxon>Insecta</taxon>
        <taxon>Pterygota</taxon>
        <taxon>Neoptera</taxon>
        <taxon>Endopterygota</taxon>
        <taxon>Diptera</taxon>
        <taxon>Brachycera</taxon>
        <taxon>Muscomorpha</taxon>
        <taxon>Ephydroidea</taxon>
        <taxon>Drosophilidae</taxon>
        <taxon>Drosophila</taxon>
        <taxon>Sophophora</taxon>
    </lineage>
</organism>
<feature type="chain" id="PRO_0000408335" description="Mitochondrial cardiolipin hydrolase">
    <location>
        <begin position="1"/>
        <end position="253"/>
    </location>
</feature>
<feature type="topological domain" description="Mitochondrial intermembrane" evidence="3">
    <location>
        <begin position="1"/>
        <end position="13"/>
    </location>
</feature>
<feature type="transmembrane region" description="Helical" evidence="3">
    <location>
        <begin position="14"/>
        <end position="30"/>
    </location>
</feature>
<feature type="topological domain" description="Cytoplasmic" evidence="3">
    <location>
        <begin position="31"/>
        <end position="253"/>
    </location>
</feature>
<feature type="domain" description="PLD phosphodiesterase">
    <location>
        <begin position="164"/>
        <end position="211"/>
    </location>
</feature>
<feature type="active site" evidence="14">
    <location>
        <position position="169"/>
    </location>
</feature>
<feature type="active site" evidence="3">
    <location>
        <position position="171"/>
    </location>
</feature>
<feature type="active site" evidence="3">
    <location>
        <position position="176"/>
    </location>
</feature>
<feature type="sequence variant" description="In strain: MEL20, ZBMEL131, ZBMEL186, ZBMEL384 and ZBMEL398.">
    <original>L</original>
    <variation>V</variation>
    <location>
        <position position="2"/>
    </location>
</feature>
<feature type="sequence variant" description="In strain: =MEL01, MEL02, MEL11, MEL12, MEL14, MEL15, MEL16, MEL17, MEL18, MEL19, MEL20, ZBMEL82, ZBMEL95, ZBMEL131, ZBMEL145, ZBMEL157, ZBMEL186, ZBMEL191, ZBMEL229, ZBMEL377, ZBMEL384 and ZBMEL398.">
    <original>D</original>
    <variation>E</variation>
    <location>
        <position position="225"/>
    </location>
</feature>
<feature type="sequence variant" description="In strain: ZBMEL191, ZBMEL229, ZBMEL377 and ZBMEL384.">
    <original>L</original>
    <variation>V</variation>
    <location>
        <position position="252"/>
    </location>
</feature>
<feature type="mutagenesis site" description="In zuc(RS49); produce some eggs with a more normal eggshell phenotype in addition to the ventralized eggs compared to null mutants." evidence="4">
    <original>A</original>
    <variation>D</variation>
    <location>
        <position position="47"/>
    </location>
</feature>
<feature type="mutagenesis site" description="Abolishes cardiolipin hydrolase activity." evidence="4 10">
    <original>H</original>
    <variation>N</variation>
    <location>
        <position position="169"/>
    </location>
</feature>
<feature type="mutagenesis site" description="In zuc(SG63); produce some eggs with a more normal eggshell phenotype in addition to the ventralized eggs compared to null mutants." evidence="4 10">
    <original>H</original>
    <variation>Y</variation>
    <location>
        <position position="169"/>
    </location>
</feature>
<feature type="helix" evidence="16">
    <location>
        <begin position="42"/>
        <end position="47"/>
    </location>
</feature>
<feature type="strand" evidence="16">
    <location>
        <begin position="51"/>
        <end position="56"/>
    </location>
</feature>
<feature type="turn" evidence="16">
    <location>
        <begin position="58"/>
        <end position="63"/>
    </location>
</feature>
<feature type="helix" evidence="16">
    <location>
        <begin position="64"/>
        <end position="67"/>
    </location>
</feature>
<feature type="helix" evidence="16">
    <location>
        <begin position="69"/>
        <end position="72"/>
    </location>
</feature>
<feature type="helix" evidence="16">
    <location>
        <begin position="89"/>
        <end position="101"/>
    </location>
</feature>
<feature type="strand" evidence="16">
    <location>
        <begin position="104"/>
        <end position="110"/>
    </location>
</feature>
<feature type="helix" evidence="16">
    <location>
        <begin position="117"/>
        <end position="129"/>
    </location>
</feature>
<feature type="strand" evidence="16">
    <location>
        <begin position="132"/>
        <end position="136"/>
    </location>
</feature>
<feature type="turn" evidence="16">
    <location>
        <begin position="139"/>
        <end position="143"/>
    </location>
</feature>
<feature type="helix" evidence="16">
    <location>
        <begin position="148"/>
        <end position="154"/>
    </location>
</feature>
<feature type="strand" evidence="16">
    <location>
        <begin position="159"/>
        <end position="161"/>
    </location>
</feature>
<feature type="strand" evidence="16">
    <location>
        <begin position="164"/>
        <end position="166"/>
    </location>
</feature>
<feature type="strand" evidence="16">
    <location>
        <begin position="172"/>
        <end position="176"/>
    </location>
</feature>
<feature type="helix" evidence="16">
    <location>
        <begin position="178"/>
        <end position="187"/>
    </location>
</feature>
<feature type="strand" evidence="16">
    <location>
        <begin position="199"/>
        <end position="204"/>
    </location>
</feature>
<feature type="helix" evidence="16">
    <location>
        <begin position="209"/>
        <end position="213"/>
    </location>
</feature>
<feature type="strand" evidence="16">
    <location>
        <begin position="215"/>
        <end position="222"/>
    </location>
</feature>
<feature type="helix" evidence="16">
    <location>
        <begin position="225"/>
        <end position="241"/>
    </location>
</feature>
<feature type="strand" evidence="16">
    <location>
        <begin position="242"/>
        <end position="244"/>
    </location>
</feature>
<proteinExistence type="evidence at protein level"/>
<keyword id="KW-0002">3D-structure</keyword>
<keyword id="KW-0221">Differentiation</keyword>
<keyword id="KW-0378">Hydrolase</keyword>
<keyword id="KW-0442">Lipid degradation</keyword>
<keyword id="KW-0443">Lipid metabolism</keyword>
<keyword id="KW-0469">Meiosis</keyword>
<keyword id="KW-0472">Membrane</keyword>
<keyword id="KW-0496">Mitochondrion</keyword>
<keyword id="KW-1000">Mitochondrion outer membrane</keyword>
<keyword id="KW-0896">Oogenesis</keyword>
<keyword id="KW-1185">Reference proteome</keyword>
<keyword id="KW-0812">Transmembrane</keyword>
<keyword id="KW-1133">Transmembrane helix</keyword>
<protein>
    <recommendedName>
        <fullName>Mitochondrial cardiolipin hydrolase</fullName>
        <ecNumber>3.1.4.-</ecNumber>
    </recommendedName>
    <alternativeName>
        <fullName evidence="2">Mitochondrial phospholipase</fullName>
        <shortName evidence="2">MitoPLD</shortName>
    </alternativeName>
    <alternativeName>
        <fullName evidence="13">Protein zucchini</fullName>
    </alternativeName>
</protein>